<proteinExistence type="inferred from homology"/>
<gene>
    <name evidence="1" type="primary">rplE</name>
    <name type="ordered locus">Teth514_0879</name>
</gene>
<name>RL5_THEPX</name>
<protein>
    <recommendedName>
        <fullName evidence="1">Large ribosomal subunit protein uL5</fullName>
    </recommendedName>
    <alternativeName>
        <fullName evidence="2">50S ribosomal protein L5</fullName>
    </alternativeName>
</protein>
<comment type="function">
    <text evidence="1">This is one of the proteins that bind and probably mediate the attachment of the 5S RNA into the large ribosomal subunit, where it forms part of the central protuberance. In the 70S ribosome it contacts protein S13 of the 30S subunit (bridge B1b), connecting the 2 subunits; this bridge is implicated in subunit movement. Contacts the P site tRNA; the 5S rRNA and some of its associated proteins might help stabilize positioning of ribosome-bound tRNAs.</text>
</comment>
<comment type="subunit">
    <text evidence="1">Part of the 50S ribosomal subunit; part of the 5S rRNA/L5/L18/L25 subcomplex. Contacts the 5S rRNA and the P site tRNA. Forms a bridge to the 30S subunit in the 70S ribosome.</text>
</comment>
<comment type="similarity">
    <text evidence="1">Belongs to the universal ribosomal protein uL5 family.</text>
</comment>
<evidence type="ECO:0000255" key="1">
    <source>
        <dbReference type="HAMAP-Rule" id="MF_01333"/>
    </source>
</evidence>
<evidence type="ECO:0000305" key="2"/>
<dbReference type="EMBL" id="CP000923">
    <property type="protein sequence ID" value="ABY92181.1"/>
    <property type="molecule type" value="Genomic_DNA"/>
</dbReference>
<dbReference type="RefSeq" id="WP_003868572.1">
    <property type="nucleotide sequence ID" value="NC_010320.1"/>
</dbReference>
<dbReference type="SMR" id="B0K5Q5"/>
<dbReference type="KEGG" id="tex:Teth514_0879"/>
<dbReference type="HOGENOM" id="CLU_061015_2_1_9"/>
<dbReference type="Proteomes" id="UP000002155">
    <property type="component" value="Chromosome"/>
</dbReference>
<dbReference type="GO" id="GO:1990904">
    <property type="term" value="C:ribonucleoprotein complex"/>
    <property type="evidence" value="ECO:0007669"/>
    <property type="project" value="UniProtKB-KW"/>
</dbReference>
<dbReference type="GO" id="GO:0005840">
    <property type="term" value="C:ribosome"/>
    <property type="evidence" value="ECO:0007669"/>
    <property type="project" value="UniProtKB-KW"/>
</dbReference>
<dbReference type="GO" id="GO:0019843">
    <property type="term" value="F:rRNA binding"/>
    <property type="evidence" value="ECO:0007669"/>
    <property type="project" value="UniProtKB-UniRule"/>
</dbReference>
<dbReference type="GO" id="GO:0003735">
    <property type="term" value="F:structural constituent of ribosome"/>
    <property type="evidence" value="ECO:0007669"/>
    <property type="project" value="InterPro"/>
</dbReference>
<dbReference type="GO" id="GO:0000049">
    <property type="term" value="F:tRNA binding"/>
    <property type="evidence" value="ECO:0007669"/>
    <property type="project" value="UniProtKB-UniRule"/>
</dbReference>
<dbReference type="GO" id="GO:0006412">
    <property type="term" value="P:translation"/>
    <property type="evidence" value="ECO:0007669"/>
    <property type="project" value="UniProtKB-UniRule"/>
</dbReference>
<dbReference type="FunFam" id="3.30.1440.10:FF:000001">
    <property type="entry name" value="50S ribosomal protein L5"/>
    <property type="match status" value="1"/>
</dbReference>
<dbReference type="Gene3D" id="3.30.1440.10">
    <property type="match status" value="1"/>
</dbReference>
<dbReference type="HAMAP" id="MF_01333_B">
    <property type="entry name" value="Ribosomal_uL5_B"/>
    <property type="match status" value="1"/>
</dbReference>
<dbReference type="InterPro" id="IPR002132">
    <property type="entry name" value="Ribosomal_uL5"/>
</dbReference>
<dbReference type="InterPro" id="IPR020930">
    <property type="entry name" value="Ribosomal_uL5_bac-type"/>
</dbReference>
<dbReference type="InterPro" id="IPR031309">
    <property type="entry name" value="Ribosomal_uL5_C"/>
</dbReference>
<dbReference type="InterPro" id="IPR020929">
    <property type="entry name" value="Ribosomal_uL5_CS"/>
</dbReference>
<dbReference type="InterPro" id="IPR022803">
    <property type="entry name" value="Ribosomal_uL5_dom_sf"/>
</dbReference>
<dbReference type="InterPro" id="IPR031310">
    <property type="entry name" value="Ribosomal_uL5_N"/>
</dbReference>
<dbReference type="NCBIfam" id="NF000585">
    <property type="entry name" value="PRK00010.1"/>
    <property type="match status" value="1"/>
</dbReference>
<dbReference type="PANTHER" id="PTHR11994">
    <property type="entry name" value="60S RIBOSOMAL PROTEIN L11-RELATED"/>
    <property type="match status" value="1"/>
</dbReference>
<dbReference type="Pfam" id="PF00281">
    <property type="entry name" value="Ribosomal_L5"/>
    <property type="match status" value="1"/>
</dbReference>
<dbReference type="Pfam" id="PF00673">
    <property type="entry name" value="Ribosomal_L5_C"/>
    <property type="match status" value="1"/>
</dbReference>
<dbReference type="PIRSF" id="PIRSF002161">
    <property type="entry name" value="Ribosomal_L5"/>
    <property type="match status" value="1"/>
</dbReference>
<dbReference type="SUPFAM" id="SSF55282">
    <property type="entry name" value="RL5-like"/>
    <property type="match status" value="1"/>
</dbReference>
<dbReference type="PROSITE" id="PS00358">
    <property type="entry name" value="RIBOSOMAL_L5"/>
    <property type="match status" value="1"/>
</dbReference>
<organism>
    <name type="scientific">Thermoanaerobacter sp. (strain X514)</name>
    <dbReference type="NCBI Taxonomy" id="399726"/>
    <lineage>
        <taxon>Bacteria</taxon>
        <taxon>Bacillati</taxon>
        <taxon>Bacillota</taxon>
        <taxon>Clostridia</taxon>
        <taxon>Thermoanaerobacterales</taxon>
        <taxon>Thermoanaerobacteraceae</taxon>
        <taxon>Thermoanaerobacter</taxon>
    </lineage>
</organism>
<feature type="chain" id="PRO_1000142466" description="Large ribosomal subunit protein uL5">
    <location>
        <begin position="1"/>
        <end position="179"/>
    </location>
</feature>
<reference key="1">
    <citation type="submission" date="2008-01" db="EMBL/GenBank/DDBJ databases">
        <title>Complete sequence of Thermoanaerobacter sp. X514.</title>
        <authorList>
            <consortium name="US DOE Joint Genome Institute"/>
            <person name="Copeland A."/>
            <person name="Lucas S."/>
            <person name="Lapidus A."/>
            <person name="Barry K."/>
            <person name="Glavina del Rio T."/>
            <person name="Dalin E."/>
            <person name="Tice H."/>
            <person name="Pitluck S."/>
            <person name="Bruce D."/>
            <person name="Goodwin L."/>
            <person name="Saunders E."/>
            <person name="Brettin T."/>
            <person name="Detter J.C."/>
            <person name="Han C."/>
            <person name="Schmutz J."/>
            <person name="Larimer F."/>
            <person name="Land M."/>
            <person name="Hauser L."/>
            <person name="Kyrpides N."/>
            <person name="Kim E."/>
            <person name="Hemme C."/>
            <person name="Fields M.W."/>
            <person name="He Z."/>
            <person name="Zhou J."/>
            <person name="Richardson P."/>
        </authorList>
    </citation>
    <scope>NUCLEOTIDE SEQUENCE [LARGE SCALE GENOMIC DNA]</scope>
    <source>
        <strain>X514</strain>
    </source>
</reference>
<accession>B0K5Q5</accession>
<sequence>MSRLREKYEKEVVPALMERFGYKNIMQVPKVEKVVINIGVGEAKENPKALEAAVDDLTMIAGQKPVITRAKRSIANFKIRKGMPIGVKVTLRGERMYEFMDKLFNIALPRVRDFKGVSPNSFDGRGNYALGIKEQLIFPEIDYDKIDKIRGMDIIIVTTAKTDEEAKGLLELLGMPFAK</sequence>
<keyword id="KW-0687">Ribonucleoprotein</keyword>
<keyword id="KW-0689">Ribosomal protein</keyword>
<keyword id="KW-0694">RNA-binding</keyword>
<keyword id="KW-0699">rRNA-binding</keyword>
<keyword id="KW-0820">tRNA-binding</keyword>